<evidence type="ECO:0000250" key="1"/>
<evidence type="ECO:0000305" key="2"/>
<evidence type="ECO:0007829" key="3">
    <source>
        <dbReference type="PDB" id="6NOT"/>
    </source>
</evidence>
<dbReference type="EMBL" id="Z54171">
    <property type="protein sequence ID" value="CAA90884.1"/>
    <property type="molecule type" value="Genomic_DNA"/>
</dbReference>
<dbReference type="EMBL" id="AJ235270">
    <property type="protein sequence ID" value="CAA14601.1"/>
    <property type="molecule type" value="Genomic_DNA"/>
</dbReference>
<dbReference type="EMBL" id="U02603">
    <property type="protein sequence ID" value="AAA18331.1"/>
    <property type="molecule type" value="Unassigned_DNA"/>
</dbReference>
<dbReference type="PIR" id="B71723">
    <property type="entry name" value="B71723"/>
</dbReference>
<dbReference type="RefSeq" id="NP_220524.1">
    <property type="nucleotide sequence ID" value="NC_000963.1"/>
</dbReference>
<dbReference type="RefSeq" id="WP_004599757.1">
    <property type="nucleotide sequence ID" value="NC_000963.1"/>
</dbReference>
<dbReference type="PDB" id="6NOT">
    <property type="method" value="X-ray"/>
    <property type="resolution" value="2.40 A"/>
    <property type="chains" value="A/B=1-699"/>
</dbReference>
<dbReference type="PDBsum" id="6NOT"/>
<dbReference type="SMR" id="P41084"/>
<dbReference type="STRING" id="272947.gene:17555215"/>
<dbReference type="EnsemblBacteria" id="CAA14601">
    <property type="protein sequence ID" value="CAA14601"/>
    <property type="gene ID" value="CAA14601"/>
</dbReference>
<dbReference type="GeneID" id="57569260"/>
<dbReference type="KEGG" id="rpr:RP132"/>
<dbReference type="PATRIC" id="fig|272947.5.peg.134"/>
<dbReference type="eggNOG" id="COG0480">
    <property type="taxonomic scope" value="Bacteria"/>
</dbReference>
<dbReference type="HOGENOM" id="CLU_002794_4_1_5"/>
<dbReference type="OrthoDB" id="9802948at2"/>
<dbReference type="Proteomes" id="UP000002480">
    <property type="component" value="Chromosome"/>
</dbReference>
<dbReference type="GO" id="GO:0005737">
    <property type="term" value="C:cytoplasm"/>
    <property type="evidence" value="ECO:0007669"/>
    <property type="project" value="UniProtKB-SubCell"/>
</dbReference>
<dbReference type="GO" id="GO:0005525">
    <property type="term" value="F:GTP binding"/>
    <property type="evidence" value="ECO:0007669"/>
    <property type="project" value="UniProtKB-UniRule"/>
</dbReference>
<dbReference type="GO" id="GO:0003924">
    <property type="term" value="F:GTPase activity"/>
    <property type="evidence" value="ECO:0007669"/>
    <property type="project" value="InterPro"/>
</dbReference>
<dbReference type="GO" id="GO:0003746">
    <property type="term" value="F:translation elongation factor activity"/>
    <property type="evidence" value="ECO:0007669"/>
    <property type="project" value="UniProtKB-UniRule"/>
</dbReference>
<dbReference type="GO" id="GO:0032790">
    <property type="term" value="P:ribosome disassembly"/>
    <property type="evidence" value="ECO:0007669"/>
    <property type="project" value="TreeGrafter"/>
</dbReference>
<dbReference type="CDD" id="cd01886">
    <property type="entry name" value="EF-G"/>
    <property type="match status" value="1"/>
</dbReference>
<dbReference type="CDD" id="cd16262">
    <property type="entry name" value="EFG_III"/>
    <property type="match status" value="1"/>
</dbReference>
<dbReference type="CDD" id="cd01434">
    <property type="entry name" value="EFG_mtEFG1_IV"/>
    <property type="match status" value="1"/>
</dbReference>
<dbReference type="CDD" id="cd03713">
    <property type="entry name" value="EFG_mtEFG_C"/>
    <property type="match status" value="1"/>
</dbReference>
<dbReference type="CDD" id="cd04088">
    <property type="entry name" value="EFG_mtEFG_II"/>
    <property type="match status" value="1"/>
</dbReference>
<dbReference type="FunFam" id="2.40.30.10:FF:000006">
    <property type="entry name" value="Elongation factor G"/>
    <property type="match status" value="1"/>
</dbReference>
<dbReference type="FunFam" id="3.30.230.10:FF:000003">
    <property type="entry name" value="Elongation factor G"/>
    <property type="match status" value="1"/>
</dbReference>
<dbReference type="FunFam" id="3.30.70.240:FF:000001">
    <property type="entry name" value="Elongation factor G"/>
    <property type="match status" value="1"/>
</dbReference>
<dbReference type="FunFam" id="3.30.70.870:FF:000001">
    <property type="entry name" value="Elongation factor G"/>
    <property type="match status" value="1"/>
</dbReference>
<dbReference type="FunFam" id="3.40.50.300:FF:000029">
    <property type="entry name" value="Elongation factor G"/>
    <property type="match status" value="1"/>
</dbReference>
<dbReference type="Gene3D" id="3.30.230.10">
    <property type="match status" value="1"/>
</dbReference>
<dbReference type="Gene3D" id="3.30.70.240">
    <property type="match status" value="1"/>
</dbReference>
<dbReference type="Gene3D" id="3.30.70.870">
    <property type="entry name" value="Elongation Factor G (Translational Gtpase), domain 3"/>
    <property type="match status" value="1"/>
</dbReference>
<dbReference type="Gene3D" id="3.40.50.300">
    <property type="entry name" value="P-loop containing nucleotide triphosphate hydrolases"/>
    <property type="match status" value="1"/>
</dbReference>
<dbReference type="Gene3D" id="2.40.30.10">
    <property type="entry name" value="Translation factors"/>
    <property type="match status" value="1"/>
</dbReference>
<dbReference type="HAMAP" id="MF_00054_B">
    <property type="entry name" value="EF_G_EF_2_B"/>
    <property type="match status" value="1"/>
</dbReference>
<dbReference type="InterPro" id="IPR053905">
    <property type="entry name" value="EF-G-like_DII"/>
</dbReference>
<dbReference type="InterPro" id="IPR041095">
    <property type="entry name" value="EFG_II"/>
</dbReference>
<dbReference type="InterPro" id="IPR009022">
    <property type="entry name" value="EFG_III"/>
</dbReference>
<dbReference type="InterPro" id="IPR035647">
    <property type="entry name" value="EFG_III/V"/>
</dbReference>
<dbReference type="InterPro" id="IPR047872">
    <property type="entry name" value="EFG_IV"/>
</dbReference>
<dbReference type="InterPro" id="IPR035649">
    <property type="entry name" value="EFG_V"/>
</dbReference>
<dbReference type="InterPro" id="IPR000640">
    <property type="entry name" value="EFG_V-like"/>
</dbReference>
<dbReference type="InterPro" id="IPR031157">
    <property type="entry name" value="G_TR_CS"/>
</dbReference>
<dbReference type="InterPro" id="IPR027417">
    <property type="entry name" value="P-loop_NTPase"/>
</dbReference>
<dbReference type="InterPro" id="IPR020568">
    <property type="entry name" value="Ribosomal_Su5_D2-typ_SF"/>
</dbReference>
<dbReference type="InterPro" id="IPR014721">
    <property type="entry name" value="Ribsml_uS5_D2-typ_fold_subgr"/>
</dbReference>
<dbReference type="InterPro" id="IPR005225">
    <property type="entry name" value="Small_GTP-bd"/>
</dbReference>
<dbReference type="InterPro" id="IPR000795">
    <property type="entry name" value="T_Tr_GTP-bd_dom"/>
</dbReference>
<dbReference type="InterPro" id="IPR009000">
    <property type="entry name" value="Transl_B-barrel_sf"/>
</dbReference>
<dbReference type="InterPro" id="IPR004540">
    <property type="entry name" value="Transl_elong_EFG/EF2"/>
</dbReference>
<dbReference type="InterPro" id="IPR005517">
    <property type="entry name" value="Transl_elong_EFG/EF2_IV"/>
</dbReference>
<dbReference type="NCBIfam" id="TIGR00484">
    <property type="entry name" value="EF-G"/>
    <property type="match status" value="1"/>
</dbReference>
<dbReference type="NCBIfam" id="NF009381">
    <property type="entry name" value="PRK12740.1-5"/>
    <property type="match status" value="1"/>
</dbReference>
<dbReference type="NCBIfam" id="TIGR00231">
    <property type="entry name" value="small_GTP"/>
    <property type="match status" value="1"/>
</dbReference>
<dbReference type="PANTHER" id="PTHR43261:SF1">
    <property type="entry name" value="RIBOSOME-RELEASING FACTOR 2, MITOCHONDRIAL"/>
    <property type="match status" value="1"/>
</dbReference>
<dbReference type="PANTHER" id="PTHR43261">
    <property type="entry name" value="TRANSLATION ELONGATION FACTOR G-RELATED"/>
    <property type="match status" value="1"/>
</dbReference>
<dbReference type="Pfam" id="PF22042">
    <property type="entry name" value="EF-G_D2"/>
    <property type="match status" value="1"/>
</dbReference>
<dbReference type="Pfam" id="PF00679">
    <property type="entry name" value="EFG_C"/>
    <property type="match status" value="1"/>
</dbReference>
<dbReference type="Pfam" id="PF14492">
    <property type="entry name" value="EFG_III"/>
    <property type="match status" value="1"/>
</dbReference>
<dbReference type="Pfam" id="PF03764">
    <property type="entry name" value="EFG_IV"/>
    <property type="match status" value="1"/>
</dbReference>
<dbReference type="Pfam" id="PF00009">
    <property type="entry name" value="GTP_EFTU"/>
    <property type="match status" value="1"/>
</dbReference>
<dbReference type="PRINTS" id="PR00315">
    <property type="entry name" value="ELONGATNFCT"/>
</dbReference>
<dbReference type="SMART" id="SM00838">
    <property type="entry name" value="EFG_C"/>
    <property type="match status" value="1"/>
</dbReference>
<dbReference type="SMART" id="SM00889">
    <property type="entry name" value="EFG_IV"/>
    <property type="match status" value="1"/>
</dbReference>
<dbReference type="SUPFAM" id="SSF54980">
    <property type="entry name" value="EF-G C-terminal domain-like"/>
    <property type="match status" value="2"/>
</dbReference>
<dbReference type="SUPFAM" id="SSF52540">
    <property type="entry name" value="P-loop containing nucleoside triphosphate hydrolases"/>
    <property type="match status" value="1"/>
</dbReference>
<dbReference type="SUPFAM" id="SSF54211">
    <property type="entry name" value="Ribosomal protein S5 domain 2-like"/>
    <property type="match status" value="1"/>
</dbReference>
<dbReference type="SUPFAM" id="SSF50447">
    <property type="entry name" value="Translation proteins"/>
    <property type="match status" value="1"/>
</dbReference>
<dbReference type="PROSITE" id="PS00301">
    <property type="entry name" value="G_TR_1"/>
    <property type="match status" value="1"/>
</dbReference>
<dbReference type="PROSITE" id="PS51722">
    <property type="entry name" value="G_TR_2"/>
    <property type="match status" value="1"/>
</dbReference>
<reference key="1">
    <citation type="journal article" date="1996" name="J. Bacteriol.">
        <title>A chimeric disposition of the elongation factor genes in Rickettsia prowazekii.</title>
        <authorList>
            <person name="Syvaenen A.-C."/>
            <person name="Amiri H."/>
            <person name="Jamal A."/>
            <person name="Andersson S.G.E."/>
            <person name="Kurland C.G."/>
        </authorList>
    </citation>
    <scope>NUCLEOTIDE SEQUENCE [GENOMIC DNA]</scope>
    <source>
        <strain>Madrid E</strain>
    </source>
</reference>
<reference key="2">
    <citation type="journal article" date="1998" name="Nature">
        <title>The genome sequence of Rickettsia prowazekii and the origin of mitochondria.</title>
        <authorList>
            <person name="Andersson S.G.E."/>
            <person name="Zomorodipour A."/>
            <person name="Andersson J.O."/>
            <person name="Sicheritz-Ponten T."/>
            <person name="Alsmark U.C.M."/>
            <person name="Podowski R.M."/>
            <person name="Naeslund A.K."/>
            <person name="Eriksson A.-S."/>
            <person name="Winkler H.H."/>
            <person name="Kurland C.G."/>
        </authorList>
    </citation>
    <scope>NUCLEOTIDE SEQUENCE [LARGE SCALE GENOMIC DNA]</scope>
    <source>
        <strain>Madrid E</strain>
    </source>
</reference>
<reference key="3">
    <citation type="submission" date="1993-10" db="EMBL/GenBank/DDBJ databases">
        <title>Organization of genes contiguous to sdhA in Rickettsia prowazekii.</title>
        <authorList>
            <person name="Wood D.O."/>
        </authorList>
    </citation>
    <scope>NUCLEOTIDE SEQUENCE [GENOMIC DNA] OF 1-47</scope>
    <source>
        <strain>Madrid E</strain>
    </source>
</reference>
<gene>
    <name type="primary">fusA</name>
    <name type="ordered locus">RP132</name>
</gene>
<sequence>MSKINKLEQIRNIGICAHIDAGKTTTTERILYYTGKSHKIGEVHEGGATMDWMEQEQERGITITSAATTCRWQDKVINIIDTPGHVDFTIEVERSLRVLDGAVAVFDGVAGVEPQSETVWRQADKYNVPRMCFVNKMDRMGADFYRCVEMIKDRLGARSLIIQLPIGIEENFKGIVNLIKMKAVIWKDESLGAEYFEEDIPADMQDKAAEYRARLLDMVVELDDTIMEQYLSGAEITEEQIKILIRKGTIEARFYPILCGSAFKNKGVQPLLDAIVDFLPSPIDIGIVKGIEVSTSEEKDFPISIVEPFSALAFKIMNDPFVGSLTFIRIYSGKITSGATVINTVKNKREKIGRMLLMHANNREDIKEASAGDIVALAGLKDTSTGDTLSDIDKQVVLERMEFPEPVIELAVEPKSTADQEKMGLALSRLAAEDPSFRVSTDHETGQTVIKGMGELHLEIIIDRMRREFKVEANIGAPQVAYRETITTACEIDYTHKKQSGGAGQFARVKIIFEPLKDVIDLKDEDKNKTFVFESKIVGGAVPKEYIPGVEKGLNNIRETGVIAGYPMIDFKATLVDGAFHDVDSSVLAFEIAAKGAFREGMQKGNPKLLEPIMKVEVITPDEYMGDIIGDLNSRRGQIQNMDPRGNAQVVTAHVPLAEMFGYVNTLRSLSQGRAQFSMIFSHYDQVPSQVADMIKAKK</sequence>
<keyword id="KW-0002">3D-structure</keyword>
<keyword id="KW-0963">Cytoplasm</keyword>
<keyword id="KW-0251">Elongation factor</keyword>
<keyword id="KW-0342">GTP-binding</keyword>
<keyword id="KW-0547">Nucleotide-binding</keyword>
<keyword id="KW-0648">Protein biosynthesis</keyword>
<keyword id="KW-1185">Reference proteome</keyword>
<feature type="chain" id="PRO_0000091201" description="Elongation factor G">
    <location>
        <begin position="1"/>
        <end position="699"/>
    </location>
</feature>
<feature type="domain" description="tr-type G">
    <location>
        <begin position="8"/>
        <end position="283"/>
    </location>
</feature>
<feature type="binding site" evidence="1">
    <location>
        <begin position="17"/>
        <end position="24"/>
    </location>
    <ligand>
        <name>GTP</name>
        <dbReference type="ChEBI" id="CHEBI:37565"/>
    </ligand>
</feature>
<feature type="binding site" evidence="1">
    <location>
        <begin position="81"/>
        <end position="85"/>
    </location>
    <ligand>
        <name>GTP</name>
        <dbReference type="ChEBI" id="CHEBI:37565"/>
    </ligand>
</feature>
<feature type="binding site" evidence="1">
    <location>
        <begin position="135"/>
        <end position="138"/>
    </location>
    <ligand>
        <name>GTP</name>
        <dbReference type="ChEBI" id="CHEBI:37565"/>
    </ligand>
</feature>
<feature type="sequence conflict" description="In Ref. 1; CAA90884." evidence="2" ref="1">
    <original>F</original>
    <variation>L</variation>
    <location>
        <position position="263"/>
    </location>
</feature>
<feature type="helix" evidence="3">
    <location>
        <begin position="7"/>
        <end position="9"/>
    </location>
</feature>
<feature type="strand" evidence="3">
    <location>
        <begin position="10"/>
        <end position="16"/>
    </location>
</feature>
<feature type="helix" evidence="3">
    <location>
        <begin position="26"/>
        <end position="35"/>
    </location>
</feature>
<feature type="strand" evidence="3">
    <location>
        <begin position="66"/>
        <end position="72"/>
    </location>
</feature>
<feature type="strand" evidence="3">
    <location>
        <begin position="75"/>
        <end position="80"/>
    </location>
</feature>
<feature type="strand" evidence="3">
    <location>
        <begin position="84"/>
        <end position="89"/>
    </location>
</feature>
<feature type="helix" evidence="3">
    <location>
        <begin position="90"/>
        <end position="98"/>
    </location>
</feature>
<feature type="strand" evidence="3">
    <location>
        <begin position="100"/>
        <end position="107"/>
    </location>
</feature>
<feature type="turn" evidence="3">
    <location>
        <begin position="108"/>
        <end position="110"/>
    </location>
</feature>
<feature type="helix" evidence="3">
    <location>
        <begin position="114"/>
        <end position="125"/>
    </location>
</feature>
<feature type="strand" evidence="3">
    <location>
        <begin position="130"/>
        <end position="135"/>
    </location>
</feature>
<feature type="helix" evidence="3">
    <location>
        <begin position="144"/>
        <end position="153"/>
    </location>
</feature>
<feature type="strand" evidence="3">
    <location>
        <begin position="159"/>
        <end position="161"/>
    </location>
</feature>
<feature type="strand" evidence="3">
    <location>
        <begin position="163"/>
        <end position="167"/>
    </location>
</feature>
<feature type="helix" evidence="3">
    <location>
        <begin position="169"/>
        <end position="171"/>
    </location>
</feature>
<feature type="strand" evidence="3">
    <location>
        <begin position="174"/>
        <end position="177"/>
    </location>
</feature>
<feature type="turn" evidence="3">
    <location>
        <begin position="178"/>
        <end position="181"/>
    </location>
</feature>
<feature type="strand" evidence="3">
    <location>
        <begin position="182"/>
        <end position="186"/>
    </location>
</feature>
<feature type="strand" evidence="3">
    <location>
        <begin position="195"/>
        <end position="198"/>
    </location>
</feature>
<feature type="helix" evidence="3">
    <location>
        <begin position="202"/>
        <end position="204"/>
    </location>
</feature>
<feature type="helix" evidence="3">
    <location>
        <begin position="205"/>
        <end position="219"/>
    </location>
</feature>
<feature type="helix" evidence="3">
    <location>
        <begin position="220"/>
        <end position="222"/>
    </location>
</feature>
<feature type="helix" evidence="3">
    <location>
        <begin position="225"/>
        <end position="231"/>
    </location>
</feature>
<feature type="helix" evidence="3">
    <location>
        <begin position="238"/>
        <end position="250"/>
    </location>
</feature>
<feature type="strand" evidence="3">
    <location>
        <begin position="255"/>
        <end position="259"/>
    </location>
</feature>
<feature type="turn" evidence="3">
    <location>
        <begin position="262"/>
        <end position="265"/>
    </location>
</feature>
<feature type="helix" evidence="3">
    <location>
        <begin position="268"/>
        <end position="278"/>
    </location>
</feature>
<feature type="helix" evidence="3">
    <location>
        <begin position="282"/>
        <end position="285"/>
    </location>
</feature>
<feature type="strand" evidence="3">
    <location>
        <begin position="287"/>
        <end position="292"/>
    </location>
</feature>
<feature type="turn" evidence="3">
    <location>
        <begin position="293"/>
        <end position="295"/>
    </location>
</feature>
<feature type="strand" evidence="3">
    <location>
        <begin position="298"/>
        <end position="302"/>
    </location>
</feature>
<feature type="strand" evidence="3">
    <location>
        <begin position="310"/>
        <end position="319"/>
    </location>
</feature>
<feature type="turn" evidence="3">
    <location>
        <begin position="320"/>
        <end position="322"/>
    </location>
</feature>
<feature type="strand" evidence="3">
    <location>
        <begin position="323"/>
        <end position="336"/>
    </location>
</feature>
<feature type="strand" evidence="3">
    <location>
        <begin position="340"/>
        <end position="343"/>
    </location>
</feature>
<feature type="turn" evidence="3">
    <location>
        <begin position="344"/>
        <end position="347"/>
    </location>
</feature>
<feature type="strand" evidence="3">
    <location>
        <begin position="348"/>
        <end position="351"/>
    </location>
</feature>
<feature type="strand" evidence="3">
    <location>
        <begin position="355"/>
        <end position="358"/>
    </location>
</feature>
<feature type="strand" evidence="3">
    <location>
        <begin position="363"/>
        <end position="370"/>
    </location>
</feature>
<feature type="strand" evidence="3">
    <location>
        <begin position="374"/>
        <end position="379"/>
    </location>
</feature>
<feature type="strand" evidence="3">
    <location>
        <begin position="388"/>
        <end position="390"/>
    </location>
</feature>
<feature type="strand" evidence="3">
    <location>
        <begin position="392"/>
        <end position="394"/>
    </location>
</feature>
<feature type="strand" evidence="3">
    <location>
        <begin position="396"/>
        <end position="399"/>
    </location>
</feature>
<feature type="strand" evidence="3">
    <location>
        <begin position="408"/>
        <end position="418"/>
    </location>
</feature>
<feature type="helix" evidence="3">
    <location>
        <begin position="420"/>
        <end position="433"/>
    </location>
</feature>
<feature type="strand" evidence="3">
    <location>
        <begin position="438"/>
        <end position="441"/>
    </location>
</feature>
<feature type="strand" evidence="3">
    <location>
        <begin position="448"/>
        <end position="454"/>
    </location>
</feature>
<feature type="helix" evidence="3">
    <location>
        <begin position="455"/>
        <end position="466"/>
    </location>
</feature>
<feature type="turn" evidence="3">
    <location>
        <begin position="467"/>
        <end position="469"/>
    </location>
</feature>
<feature type="strand" evidence="3">
    <location>
        <begin position="473"/>
        <end position="475"/>
    </location>
</feature>
<feature type="strand" evidence="3">
    <location>
        <begin position="483"/>
        <end position="485"/>
    </location>
</feature>
<feature type="strand" evidence="3">
    <location>
        <begin position="490"/>
        <end position="496"/>
    </location>
</feature>
<feature type="strand" evidence="3">
    <location>
        <begin position="507"/>
        <end position="515"/>
    </location>
</feature>
<feature type="helix" evidence="3">
    <location>
        <begin position="516"/>
        <end position="518"/>
    </location>
</feature>
<feature type="strand" evidence="3">
    <location>
        <begin position="530"/>
        <end position="535"/>
    </location>
</feature>
<feature type="helix" evidence="3">
    <location>
        <begin position="547"/>
        <end position="558"/>
    </location>
</feature>
<feature type="turn" evidence="3">
    <location>
        <begin position="562"/>
        <end position="564"/>
    </location>
</feature>
<feature type="strand" evidence="3">
    <location>
        <begin position="570"/>
        <end position="579"/>
    </location>
</feature>
<feature type="helix" evidence="3">
    <location>
        <begin position="591"/>
        <end position="601"/>
    </location>
</feature>
<feature type="helix" evidence="3">
    <location>
        <begin position="602"/>
        <end position="604"/>
    </location>
</feature>
<feature type="strand" evidence="3">
    <location>
        <begin position="608"/>
        <end position="621"/>
    </location>
</feature>
<feature type="helix" evidence="3">
    <location>
        <begin position="622"/>
        <end position="624"/>
    </location>
</feature>
<feature type="helix" evidence="3">
    <location>
        <begin position="625"/>
        <end position="634"/>
    </location>
</feature>
<feature type="strand" evidence="3">
    <location>
        <begin position="638"/>
        <end position="645"/>
    </location>
</feature>
<feature type="strand" evidence="3">
    <location>
        <begin position="648"/>
        <end position="656"/>
    </location>
</feature>
<feature type="helix" evidence="3">
    <location>
        <begin position="657"/>
        <end position="659"/>
    </location>
</feature>
<feature type="helix" evidence="3">
    <location>
        <begin position="663"/>
        <end position="670"/>
    </location>
</feature>
<feature type="turn" evidence="3">
    <location>
        <begin position="671"/>
        <end position="673"/>
    </location>
</feature>
<feature type="strand" evidence="3">
    <location>
        <begin position="676"/>
        <end position="686"/>
    </location>
</feature>
<feature type="helix" evidence="3">
    <location>
        <begin position="689"/>
        <end position="695"/>
    </location>
</feature>
<name>EFG_RICPR</name>
<protein>
    <recommendedName>
        <fullName>Elongation factor G</fullName>
        <shortName>EF-G</shortName>
    </recommendedName>
</protein>
<comment type="function">
    <text evidence="1">Catalyzes the GTP-dependent ribosomal translocation step during translation elongation. During this step, the ribosome changes from the pre-translocational (PRE) to the post-translocational (POST) state as the newly formed A-site-bound peptidyl-tRNA and P-site-bound deacylated tRNA move to the P and E sites, respectively. Catalyzes the coordinated movement of the two tRNA molecules, the mRNA and conformational changes in the ribosome (By similarity).</text>
</comment>
<comment type="subcellular location">
    <subcellularLocation>
        <location evidence="1">Cytoplasm</location>
    </subcellularLocation>
</comment>
<comment type="similarity">
    <text evidence="2">Belongs to the TRAFAC class translation factor GTPase superfamily. Classic translation factor GTPase family. EF-G/EF-2 subfamily.</text>
</comment>
<accession>P41084</accession>
<proteinExistence type="evidence at protein level"/>
<organism>
    <name type="scientific">Rickettsia prowazekii (strain Madrid E)</name>
    <dbReference type="NCBI Taxonomy" id="272947"/>
    <lineage>
        <taxon>Bacteria</taxon>
        <taxon>Pseudomonadati</taxon>
        <taxon>Pseudomonadota</taxon>
        <taxon>Alphaproteobacteria</taxon>
        <taxon>Rickettsiales</taxon>
        <taxon>Rickettsiaceae</taxon>
        <taxon>Rickettsieae</taxon>
        <taxon>Rickettsia</taxon>
        <taxon>typhus group</taxon>
    </lineage>
</organism>